<dbReference type="EMBL" id="AB065803">
    <property type="protein sequence ID" value="BAC06022.1"/>
    <property type="molecule type" value="Genomic_DNA"/>
</dbReference>
<dbReference type="EMBL" id="CH471076">
    <property type="protein sequence ID" value="EAW73845.1"/>
    <property type="molecule type" value="Genomic_DNA"/>
</dbReference>
<dbReference type="EMBL" id="BC137028">
    <property type="protein sequence ID" value="AAI37029.1"/>
    <property type="molecule type" value="mRNA"/>
</dbReference>
<dbReference type="EMBL" id="BC137029">
    <property type="protein sequence ID" value="AAI37030.1"/>
    <property type="molecule type" value="mRNA"/>
</dbReference>
<dbReference type="EMBL" id="AF399569">
    <property type="protein sequence ID" value="AAK95054.1"/>
    <property type="molecule type" value="Genomic_DNA"/>
</dbReference>
<dbReference type="EMBL" id="BK004307">
    <property type="protein sequence ID" value="DAA04705.1"/>
    <property type="molecule type" value="Genomic_DNA"/>
</dbReference>
<dbReference type="CCDS" id="CCDS31562.1"/>
<dbReference type="RefSeq" id="NP_001004708.1">
    <property type="nucleotide sequence ID" value="NM_001004708.1"/>
</dbReference>
<dbReference type="SMR" id="Q8NGJ1"/>
<dbReference type="BioGRID" id="128611">
    <property type="interactions" value="16"/>
</dbReference>
<dbReference type="FunCoup" id="Q8NGJ1">
    <property type="interactions" value="417"/>
</dbReference>
<dbReference type="IntAct" id="Q8NGJ1">
    <property type="interactions" value="2"/>
</dbReference>
<dbReference type="MINT" id="Q8NGJ1"/>
<dbReference type="STRING" id="9606.ENSP00000300127"/>
<dbReference type="GlyCosmos" id="Q8NGJ1">
    <property type="glycosylation" value="1 site, No reported glycans"/>
</dbReference>
<dbReference type="GlyGen" id="Q8NGJ1">
    <property type="glycosylation" value="2 sites, 1 O-linked glycan (1 site)"/>
</dbReference>
<dbReference type="PhosphoSitePlus" id="Q8NGJ1"/>
<dbReference type="BioMuta" id="OR4D6"/>
<dbReference type="DMDM" id="38372703"/>
<dbReference type="MassIVE" id="Q8NGJ1"/>
<dbReference type="PaxDb" id="9606-ENSP00000300127"/>
<dbReference type="ProteomicsDB" id="73527"/>
<dbReference type="Antibodypedia" id="27754">
    <property type="antibodies" value="100 antibodies from 20 providers"/>
</dbReference>
<dbReference type="DNASU" id="219983"/>
<dbReference type="Ensembl" id="ENST00000300127.3">
    <property type="protein sequence ID" value="ENSP00000300127.2"/>
    <property type="gene ID" value="ENSG00000166884.3"/>
</dbReference>
<dbReference type="GeneID" id="219983"/>
<dbReference type="KEGG" id="hsa:219983"/>
<dbReference type="MANE-Select" id="ENST00000300127.3">
    <property type="protein sequence ID" value="ENSP00000300127.2"/>
    <property type="RefSeq nucleotide sequence ID" value="NM_001004708.1"/>
    <property type="RefSeq protein sequence ID" value="NP_001004708.1"/>
</dbReference>
<dbReference type="UCSC" id="uc010rku.3">
    <property type="organism name" value="human"/>
</dbReference>
<dbReference type="AGR" id="HGNC:15175"/>
<dbReference type="CTD" id="219983"/>
<dbReference type="DisGeNET" id="219983"/>
<dbReference type="GeneCards" id="OR4D6"/>
<dbReference type="HGNC" id="HGNC:15175">
    <property type="gene designation" value="OR4D6"/>
</dbReference>
<dbReference type="HPA" id="ENSG00000166884">
    <property type="expression patterns" value="Not detected"/>
</dbReference>
<dbReference type="neXtProt" id="NX_Q8NGJ1"/>
<dbReference type="OpenTargets" id="ENSG00000166884"/>
<dbReference type="PharmGKB" id="PA32273"/>
<dbReference type="VEuPathDB" id="HostDB:ENSG00000166884"/>
<dbReference type="eggNOG" id="ENOG502RCKG">
    <property type="taxonomic scope" value="Eukaryota"/>
</dbReference>
<dbReference type="GeneTree" id="ENSGT00940000163118"/>
<dbReference type="HOGENOM" id="CLU_012526_8_1_1"/>
<dbReference type="InParanoid" id="Q8NGJ1"/>
<dbReference type="OMA" id="FMTLPMD"/>
<dbReference type="OrthoDB" id="9442490at2759"/>
<dbReference type="PAN-GO" id="Q8NGJ1">
    <property type="GO annotations" value="2 GO annotations based on evolutionary models"/>
</dbReference>
<dbReference type="PhylomeDB" id="Q8NGJ1"/>
<dbReference type="TreeFam" id="TF352732"/>
<dbReference type="PathwayCommons" id="Q8NGJ1"/>
<dbReference type="Reactome" id="R-HSA-9752946">
    <property type="pathway name" value="Expression and translocation of olfactory receptors"/>
</dbReference>
<dbReference type="SignaLink" id="Q8NGJ1"/>
<dbReference type="BioGRID-ORCS" id="219983">
    <property type="hits" value="8 hits in 741 CRISPR screens"/>
</dbReference>
<dbReference type="GeneWiki" id="OR4D6"/>
<dbReference type="GenomeRNAi" id="219983"/>
<dbReference type="Pharos" id="Q8NGJ1">
    <property type="development level" value="Tdark"/>
</dbReference>
<dbReference type="PRO" id="PR:Q8NGJ1"/>
<dbReference type="Proteomes" id="UP000005640">
    <property type="component" value="Chromosome 11"/>
</dbReference>
<dbReference type="RNAct" id="Q8NGJ1">
    <property type="molecule type" value="protein"/>
</dbReference>
<dbReference type="Bgee" id="ENSG00000166884">
    <property type="expression patterns" value="Expressed in vermiform appendix and 4 other cell types or tissues"/>
</dbReference>
<dbReference type="GO" id="GO:0005886">
    <property type="term" value="C:plasma membrane"/>
    <property type="evidence" value="ECO:0000318"/>
    <property type="project" value="GO_Central"/>
</dbReference>
<dbReference type="GO" id="GO:0004930">
    <property type="term" value="F:G protein-coupled receptor activity"/>
    <property type="evidence" value="ECO:0007669"/>
    <property type="project" value="UniProtKB-KW"/>
</dbReference>
<dbReference type="GO" id="GO:0004984">
    <property type="term" value="F:olfactory receptor activity"/>
    <property type="evidence" value="ECO:0000318"/>
    <property type="project" value="GO_Central"/>
</dbReference>
<dbReference type="CDD" id="cd15936">
    <property type="entry name" value="7tmA_OR4D-like"/>
    <property type="match status" value="1"/>
</dbReference>
<dbReference type="FunFam" id="1.10.1220.70:FF:000001">
    <property type="entry name" value="Olfactory receptor"/>
    <property type="match status" value="1"/>
</dbReference>
<dbReference type="FunFam" id="1.20.1070.10:FF:000007">
    <property type="entry name" value="Olfactory receptor"/>
    <property type="match status" value="1"/>
</dbReference>
<dbReference type="Gene3D" id="1.20.1070.10">
    <property type="entry name" value="Rhodopsin 7-helix transmembrane proteins"/>
    <property type="match status" value="1"/>
</dbReference>
<dbReference type="InterPro" id="IPR000276">
    <property type="entry name" value="GPCR_Rhodpsn"/>
</dbReference>
<dbReference type="InterPro" id="IPR017452">
    <property type="entry name" value="GPCR_Rhodpsn_7TM"/>
</dbReference>
<dbReference type="InterPro" id="IPR000725">
    <property type="entry name" value="Olfact_rcpt"/>
</dbReference>
<dbReference type="InterPro" id="IPR050427">
    <property type="entry name" value="Olfactory_Receptors"/>
</dbReference>
<dbReference type="PANTHER" id="PTHR48002">
    <property type="entry name" value="OLFACTORY RECEPTOR"/>
    <property type="match status" value="1"/>
</dbReference>
<dbReference type="Pfam" id="PF13853">
    <property type="entry name" value="7tm_4"/>
    <property type="match status" value="1"/>
</dbReference>
<dbReference type="PRINTS" id="PR00237">
    <property type="entry name" value="GPCRRHODOPSN"/>
</dbReference>
<dbReference type="PRINTS" id="PR00245">
    <property type="entry name" value="OLFACTORYR"/>
</dbReference>
<dbReference type="SUPFAM" id="SSF81321">
    <property type="entry name" value="Family A G protein-coupled receptor-like"/>
    <property type="match status" value="1"/>
</dbReference>
<dbReference type="PROSITE" id="PS00237">
    <property type="entry name" value="G_PROTEIN_RECEP_F1_1"/>
    <property type="match status" value="1"/>
</dbReference>
<dbReference type="PROSITE" id="PS50262">
    <property type="entry name" value="G_PROTEIN_RECEP_F1_2"/>
    <property type="match status" value="1"/>
</dbReference>
<keyword id="KW-1003">Cell membrane</keyword>
<keyword id="KW-1015">Disulfide bond</keyword>
<keyword id="KW-0297">G-protein coupled receptor</keyword>
<keyword id="KW-0325">Glycoprotein</keyword>
<keyword id="KW-0472">Membrane</keyword>
<keyword id="KW-0552">Olfaction</keyword>
<keyword id="KW-0675">Receptor</keyword>
<keyword id="KW-1185">Reference proteome</keyword>
<keyword id="KW-0716">Sensory transduction</keyword>
<keyword id="KW-0807">Transducer</keyword>
<keyword id="KW-0812">Transmembrane</keyword>
<keyword id="KW-1133">Transmembrane helix</keyword>
<name>OR4D6_HUMAN</name>
<sequence length="314" mass="35954">MDQINHTNVKEFFFLELTRSRELEFFLFVVFFAVYVATVLGNALIVVTITCESRLHTPMYFLLRNKSVLDIVFSSITVPKFLVDLLSDRKTISYNDCMAQIFFFHFAGGADIFFLSVMAYDRYLAIAKPLHYVTMMRKEVWVALVVASWVSGGLHSIIQVILMLPFPFCGPNTLDAFYCYVLQVVKLACTDTFALELFMISNNGLVTLLWFLLLLGSYTVILVMLRSHSGEGRNKALSTCTSHMLVVTLHFVPCVYIYCRPFMTLPMDTTISINNTVITPMLNPIIYSLRNQEMKSAMQRLQRRLGPSESRKWG</sequence>
<evidence type="ECO:0000255" key="1"/>
<evidence type="ECO:0000255" key="2">
    <source>
        <dbReference type="PROSITE-ProRule" id="PRU00521"/>
    </source>
</evidence>
<evidence type="ECO:0000269" key="3">
    <source>
    </source>
</evidence>
<evidence type="ECO:0000269" key="4">
    <source ref="2"/>
</evidence>
<evidence type="ECO:0000305" key="5"/>
<protein>
    <recommendedName>
        <fullName>Olfactory receptor 4D6</fullName>
    </recommendedName>
    <alternativeName>
        <fullName>Olfactory receptor OR11-250</fullName>
    </alternativeName>
</protein>
<feature type="chain" id="PRO_0000150540" description="Olfactory receptor 4D6">
    <location>
        <begin position="1"/>
        <end position="314"/>
    </location>
</feature>
<feature type="topological domain" description="Extracellular" evidence="1">
    <location>
        <begin position="1"/>
        <end position="25"/>
    </location>
</feature>
<feature type="transmembrane region" description="Helical; Name=1" evidence="1">
    <location>
        <begin position="26"/>
        <end position="49"/>
    </location>
</feature>
<feature type="topological domain" description="Cytoplasmic" evidence="1">
    <location>
        <begin position="50"/>
        <end position="57"/>
    </location>
</feature>
<feature type="transmembrane region" description="Helical; Name=2" evidence="1">
    <location>
        <begin position="58"/>
        <end position="79"/>
    </location>
</feature>
<feature type="topological domain" description="Extracellular" evidence="1">
    <location>
        <begin position="80"/>
        <end position="100"/>
    </location>
</feature>
<feature type="transmembrane region" description="Helical; Name=3" evidence="1">
    <location>
        <begin position="101"/>
        <end position="120"/>
    </location>
</feature>
<feature type="topological domain" description="Cytoplasmic" evidence="1">
    <location>
        <begin position="121"/>
        <end position="139"/>
    </location>
</feature>
<feature type="transmembrane region" description="Helical; Name=4" evidence="1">
    <location>
        <begin position="140"/>
        <end position="158"/>
    </location>
</feature>
<feature type="topological domain" description="Extracellular" evidence="1">
    <location>
        <begin position="159"/>
        <end position="195"/>
    </location>
</feature>
<feature type="transmembrane region" description="Helical; Name=5" evidence="1">
    <location>
        <begin position="196"/>
        <end position="219"/>
    </location>
</feature>
<feature type="topological domain" description="Cytoplasmic" evidence="1">
    <location>
        <begin position="220"/>
        <end position="235"/>
    </location>
</feature>
<feature type="transmembrane region" description="Helical; Name=6" evidence="1">
    <location>
        <begin position="236"/>
        <end position="258"/>
    </location>
</feature>
<feature type="topological domain" description="Extracellular" evidence="1">
    <location>
        <begin position="259"/>
        <end position="269"/>
    </location>
</feature>
<feature type="transmembrane region" description="Helical; Name=7" evidence="1">
    <location>
        <begin position="270"/>
        <end position="289"/>
    </location>
</feature>
<feature type="topological domain" description="Cytoplasmic" evidence="1">
    <location>
        <begin position="290"/>
        <end position="314"/>
    </location>
</feature>
<feature type="glycosylation site" description="N-linked (GlcNAc...) asparagine" evidence="1">
    <location>
        <position position="5"/>
    </location>
</feature>
<feature type="disulfide bond" evidence="2">
    <location>
        <begin position="97"/>
        <end position="189"/>
    </location>
</feature>
<feature type="sequence variant" id="VAR_034194" description="In dbSNP:rs17153766.">
    <original>E</original>
    <variation>Q</variation>
    <location>
        <position position="11"/>
    </location>
</feature>
<feature type="sequence variant" id="VAR_053169" description="In dbSNP:rs1453544.">
    <original>M</original>
    <variation>V</variation>
    <location>
        <position position="59"/>
    </location>
</feature>
<feature type="sequence variant" id="VAR_024091" description="In dbSNP:rs1453543." evidence="3 4">
    <original>D</original>
    <variation>G</variation>
    <location>
        <position position="96"/>
    </location>
</feature>
<feature type="sequence variant" id="VAR_034195" description="In dbSNP:rs17153770.">
    <original>F</original>
    <variation>S</variation>
    <location>
        <position position="102"/>
    </location>
</feature>
<feature type="sequence variant" id="VAR_034196" description="In dbSNP:rs17500380.">
    <original>D</original>
    <variation>A</variation>
    <location>
        <position position="111"/>
    </location>
</feature>
<feature type="sequence variant" id="VAR_024092" description="In dbSNP:rs1453542.">
    <original>S</original>
    <variation>T</variation>
    <location>
        <position position="151"/>
    </location>
</feature>
<feature type="sequence variant" id="VAR_024093" description="In dbSNP:rs1453541.">
    <original>M</original>
    <variation>T</variation>
    <location>
        <position position="263"/>
    </location>
</feature>
<organism>
    <name type="scientific">Homo sapiens</name>
    <name type="common">Human</name>
    <dbReference type="NCBI Taxonomy" id="9606"/>
    <lineage>
        <taxon>Eukaryota</taxon>
        <taxon>Metazoa</taxon>
        <taxon>Chordata</taxon>
        <taxon>Craniata</taxon>
        <taxon>Vertebrata</taxon>
        <taxon>Euteleostomi</taxon>
        <taxon>Mammalia</taxon>
        <taxon>Eutheria</taxon>
        <taxon>Euarchontoglires</taxon>
        <taxon>Primates</taxon>
        <taxon>Haplorrhini</taxon>
        <taxon>Catarrhini</taxon>
        <taxon>Hominidae</taxon>
        <taxon>Homo</taxon>
    </lineage>
</organism>
<gene>
    <name type="primary">OR4D6</name>
</gene>
<accession>Q8NGJ1</accession>
<accession>B2RNP7</accession>
<accession>Q6IFF5</accession>
<accession>Q96R74</accession>
<comment type="function">
    <text evidence="5">Odorant receptor.</text>
</comment>
<comment type="subcellular location">
    <subcellularLocation>
        <location>Cell membrane</location>
        <topology>Multi-pass membrane protein</topology>
    </subcellularLocation>
</comment>
<comment type="similarity">
    <text evidence="2">Belongs to the G-protein coupled receptor 1 family.</text>
</comment>
<comment type="online information" name="Human Olfactory Receptor Data Exploratorium (HORDE)">
    <link uri="http://genome.weizmann.ac.il/horde/card/index/symbol:OR4D6"/>
</comment>
<reference key="1">
    <citation type="submission" date="2001-07" db="EMBL/GenBank/DDBJ databases">
        <title>Genome-wide discovery and analysis of human seven transmembrane helix receptor genes.</title>
        <authorList>
            <person name="Suwa M."/>
            <person name="Sato T."/>
            <person name="Okouchi I."/>
            <person name="Arita M."/>
            <person name="Futami K."/>
            <person name="Matsumoto S."/>
            <person name="Tsutsumi S."/>
            <person name="Aburatani H."/>
            <person name="Asai K."/>
            <person name="Akiyama Y."/>
        </authorList>
    </citation>
    <scope>NUCLEOTIDE SEQUENCE [GENOMIC DNA]</scope>
</reference>
<reference key="2">
    <citation type="submission" date="2005-07" db="EMBL/GenBank/DDBJ databases">
        <authorList>
            <person name="Mural R.J."/>
            <person name="Istrail S."/>
            <person name="Sutton G.G."/>
            <person name="Florea L."/>
            <person name="Halpern A.L."/>
            <person name="Mobarry C.M."/>
            <person name="Lippert R."/>
            <person name="Walenz B."/>
            <person name="Shatkay H."/>
            <person name="Dew I."/>
            <person name="Miller J.R."/>
            <person name="Flanigan M.J."/>
            <person name="Edwards N.J."/>
            <person name="Bolanos R."/>
            <person name="Fasulo D."/>
            <person name="Halldorsson B.V."/>
            <person name="Hannenhalli S."/>
            <person name="Turner R."/>
            <person name="Yooseph S."/>
            <person name="Lu F."/>
            <person name="Nusskern D.R."/>
            <person name="Shue B.C."/>
            <person name="Zheng X.H."/>
            <person name="Zhong F."/>
            <person name="Delcher A.L."/>
            <person name="Huson D.H."/>
            <person name="Kravitz S.A."/>
            <person name="Mouchard L."/>
            <person name="Reinert K."/>
            <person name="Remington K.A."/>
            <person name="Clark A.G."/>
            <person name="Waterman M.S."/>
            <person name="Eichler E.E."/>
            <person name="Adams M.D."/>
            <person name="Hunkapiller M.W."/>
            <person name="Myers E.W."/>
            <person name="Venter J.C."/>
        </authorList>
    </citation>
    <scope>NUCLEOTIDE SEQUENCE [LARGE SCALE GENOMIC DNA]</scope>
    <scope>VARIANT GLY-96</scope>
</reference>
<reference key="3">
    <citation type="journal article" date="2004" name="Genome Res.">
        <title>The status, quality, and expansion of the NIH full-length cDNA project: the Mammalian Gene Collection (MGC).</title>
        <authorList>
            <consortium name="The MGC Project Team"/>
        </authorList>
    </citation>
    <scope>NUCLEOTIDE SEQUENCE [LARGE SCALE MRNA]</scope>
    <scope>VARIANT GLY-96</scope>
</reference>
<reference key="4">
    <citation type="journal article" date="2002" name="Genomics">
        <title>DEFOG: a practical scheme for deciphering families of genes.</title>
        <authorList>
            <person name="Fuchs T."/>
            <person name="Malecova B."/>
            <person name="Linhart C."/>
            <person name="Sharan R."/>
            <person name="Khen M."/>
            <person name="Herwig R."/>
            <person name="Shmulevich D."/>
            <person name="Elkon R."/>
            <person name="Steinfath M."/>
            <person name="O'Brien J.K."/>
            <person name="Radelof U."/>
            <person name="Lehrach H."/>
            <person name="Lancet D."/>
            <person name="Shamir R."/>
        </authorList>
    </citation>
    <scope>NUCLEOTIDE SEQUENCE [GENOMIC DNA] OF 68-280</scope>
</reference>
<reference key="5">
    <citation type="journal article" date="2004" name="Proc. Natl. Acad. Sci. U.S.A.">
        <title>The human olfactory receptor gene family.</title>
        <authorList>
            <person name="Malnic B."/>
            <person name="Godfrey P.A."/>
            <person name="Buck L.B."/>
        </authorList>
    </citation>
    <scope>IDENTIFICATION</scope>
</reference>
<reference key="6">
    <citation type="journal article" date="2004" name="Proc. Natl. Acad. Sci. U.S.A.">
        <authorList>
            <person name="Malnic B."/>
            <person name="Godfrey P.A."/>
            <person name="Buck L.B."/>
        </authorList>
    </citation>
    <scope>ERRATUM OF PUBMED:14983052</scope>
</reference>
<proteinExistence type="evidence at transcript level"/>